<proteinExistence type="inferred from homology"/>
<comment type="catalytic activity">
    <reaction>
        <text>Hydrolyzes the link between N-acetylmuramoyl residues and L-amino acid residues in certain cell-wall glycopeptides.</text>
        <dbReference type="EC" id="3.5.1.28"/>
    </reaction>
</comment>
<comment type="subcellular location">
    <subcellularLocation>
        <location evidence="3">Secreted</location>
    </subcellularLocation>
</comment>
<comment type="similarity">
    <text evidence="3">Belongs to the N-acetylmuramoyl-L-alanine amidase 2 family.</text>
</comment>
<organism>
    <name type="scientific">Bacillus licheniformis</name>
    <dbReference type="NCBI Taxonomy" id="1402"/>
    <lineage>
        <taxon>Bacteria</taxon>
        <taxon>Bacillati</taxon>
        <taxon>Bacillota</taxon>
        <taxon>Bacilli</taxon>
        <taxon>Bacillales</taxon>
        <taxon>Bacillaceae</taxon>
        <taxon>Bacillus</taxon>
    </lineage>
</organism>
<evidence type="ECO:0000250" key="1"/>
<evidence type="ECO:0000255" key="2"/>
<evidence type="ECO:0000305" key="3"/>
<accession>Q99125</accession>
<sequence>MVKVINNFVKVNQYDRPGLKLAAVKGIVMHWTATPGASALNERNYFNGTCIADKRYASAHYFVDRHEAQHIIPDHEVAYHAHDQNRCYVSFLKPNANTTALGVEMCVEKDGTIHEETIRNAAELVADLCKTYGLSADRIVRHYDVTNKGCPTPWVRDAGQLSAFRKRVDSLLGRKTVSVSAASTSQTSSSSGIILKKGMSGSHVKKLQTRLVAAGFSLPKYGADGSYGDETVHAVVSLQKKAGIKADGIYGPSTEKALSAAEASAAGKSKTWTLPDGIYKVKNPLMKGTAVTQIQTALAALYYYPDKGAKNNGIDGYYGMKTANAVKRFQLMYGLGADGIYGPKTKAKMLSLLK</sequence>
<keyword id="KW-0961">Cell wall biogenesis/degradation</keyword>
<keyword id="KW-0378">Hydrolase</keyword>
<keyword id="KW-0964">Secreted</keyword>
<keyword id="KW-0732">Signal</keyword>
<name>CWLX_BACLI</name>
<reference key="1">
    <citation type="journal article" date="1991" name="J. Gen. Microbiol.">
        <title>Identification of four unique clones encoding 10 kDa proteins from Bacillus that cause phenotypic complementation of a phoA mutant strain of Escherichia coli.</title>
        <authorList>
            <person name="Lee J.W.K."/>
            <person name="Edwards C.W."/>
            <person name="Hulett F.M."/>
        </authorList>
    </citation>
    <scope>NUCLEOTIDE SEQUENCE [GENOMIC DNA]</scope>
    <source>
        <strain>MC14</strain>
    </source>
</reference>
<feature type="signal peptide" evidence="1">
    <location>
        <begin position="1"/>
        <end position="39"/>
    </location>
</feature>
<feature type="chain" id="PRO_0000006456" description="Probable N-acetylmuramoyl-L-alanine amidase">
    <location>
        <begin position="40"/>
        <end position="354"/>
    </location>
</feature>
<feature type="domain" description="N-acetylmuramoyl-L-alanine amidase" evidence="2">
    <location>
        <begin position="40"/>
        <end position="152"/>
    </location>
</feature>
<protein>
    <recommendedName>
        <fullName>Probable N-acetylmuramoyl-L-alanine amidase</fullName>
        <ecNumber>3.5.1.28</ecNumber>
    </recommendedName>
    <alternativeName>
        <fullName>Autolysin</fullName>
    </alternativeName>
    <alternativeName>
        <fullName>Cell wall hydrolase</fullName>
    </alternativeName>
    <alternativeName>
        <fullName>ORFL3</fullName>
    </alternativeName>
</protein>
<dbReference type="EC" id="3.5.1.28"/>
<dbReference type="EMBL" id="M63942">
    <property type="protein sequence ID" value="AAA22888.1"/>
    <property type="molecule type" value="Genomic_DNA"/>
</dbReference>
<dbReference type="PIR" id="D49754">
    <property type="entry name" value="D49754"/>
</dbReference>
<dbReference type="SMR" id="Q99125"/>
<dbReference type="GO" id="GO:0005576">
    <property type="term" value="C:extracellular region"/>
    <property type="evidence" value="ECO:0007669"/>
    <property type="project" value="UniProtKB-SubCell"/>
</dbReference>
<dbReference type="GO" id="GO:0008745">
    <property type="term" value="F:N-acetylmuramoyl-L-alanine amidase activity"/>
    <property type="evidence" value="ECO:0007669"/>
    <property type="project" value="UniProtKB-EC"/>
</dbReference>
<dbReference type="GO" id="GO:0071555">
    <property type="term" value="P:cell wall organization"/>
    <property type="evidence" value="ECO:0007669"/>
    <property type="project" value="UniProtKB-KW"/>
</dbReference>
<dbReference type="GO" id="GO:0009253">
    <property type="term" value="P:peptidoglycan catabolic process"/>
    <property type="evidence" value="ECO:0007669"/>
    <property type="project" value="InterPro"/>
</dbReference>
<dbReference type="GO" id="GO:0009254">
    <property type="term" value="P:peptidoglycan turnover"/>
    <property type="evidence" value="ECO:0007669"/>
    <property type="project" value="TreeGrafter"/>
</dbReference>
<dbReference type="CDD" id="cd06583">
    <property type="entry name" value="PGRP"/>
    <property type="match status" value="1"/>
</dbReference>
<dbReference type="Gene3D" id="3.40.80.10">
    <property type="entry name" value="Peptidoglycan recognition protein-like"/>
    <property type="match status" value="1"/>
</dbReference>
<dbReference type="Gene3D" id="1.10.101.10">
    <property type="entry name" value="PGBD-like superfamily/PGBD"/>
    <property type="match status" value="2"/>
</dbReference>
<dbReference type="InterPro" id="IPR036505">
    <property type="entry name" value="Amidase/PGRP_sf"/>
</dbReference>
<dbReference type="InterPro" id="IPR002502">
    <property type="entry name" value="Amidase_domain"/>
</dbReference>
<dbReference type="InterPro" id="IPR051206">
    <property type="entry name" value="NAMLAA_amidase_2"/>
</dbReference>
<dbReference type="InterPro" id="IPR002477">
    <property type="entry name" value="Peptidoglycan-bd-like"/>
</dbReference>
<dbReference type="InterPro" id="IPR036365">
    <property type="entry name" value="PGBD-like_sf"/>
</dbReference>
<dbReference type="InterPro" id="IPR036366">
    <property type="entry name" value="PGBDSf"/>
</dbReference>
<dbReference type="PANTHER" id="PTHR30417">
    <property type="entry name" value="N-ACETYLMURAMOYL-L-ALANINE AMIDASE AMID"/>
    <property type="match status" value="1"/>
</dbReference>
<dbReference type="PANTHER" id="PTHR30417:SF1">
    <property type="entry name" value="N-ACETYLMURAMOYL-L-ALANINE AMIDASE AMID"/>
    <property type="match status" value="1"/>
</dbReference>
<dbReference type="Pfam" id="PF01510">
    <property type="entry name" value="Amidase_2"/>
    <property type="match status" value="1"/>
</dbReference>
<dbReference type="Pfam" id="PF01471">
    <property type="entry name" value="PG_binding_1"/>
    <property type="match status" value="2"/>
</dbReference>
<dbReference type="SMART" id="SM00644">
    <property type="entry name" value="Ami_2"/>
    <property type="match status" value="1"/>
</dbReference>
<dbReference type="SUPFAM" id="SSF55846">
    <property type="entry name" value="N-acetylmuramoyl-L-alanine amidase-like"/>
    <property type="match status" value="1"/>
</dbReference>
<dbReference type="SUPFAM" id="SSF47090">
    <property type="entry name" value="PGBD-like"/>
    <property type="match status" value="2"/>
</dbReference>